<protein>
    <recommendedName>
        <fullName evidence="2">Adenylosuccinate synthetase</fullName>
        <shortName evidence="2">AMPSase</shortName>
        <shortName evidence="2">AdSS</shortName>
        <ecNumber evidence="2">6.3.4.4</ecNumber>
    </recommendedName>
    <alternativeName>
        <fullName evidence="2">IMP--aspartate ligase</fullName>
    </alternativeName>
</protein>
<comment type="function">
    <text evidence="2">Plays an important role in the de novo pathway of purine nucleotide biosynthesis. Catalyzes the first committed step in the biosynthesis of AMP from IMP.</text>
</comment>
<comment type="catalytic activity">
    <reaction evidence="2">
        <text>IMP + L-aspartate + GTP = N(6)-(1,2-dicarboxyethyl)-AMP + GDP + phosphate + 2 H(+)</text>
        <dbReference type="Rhea" id="RHEA:15753"/>
        <dbReference type="ChEBI" id="CHEBI:15378"/>
        <dbReference type="ChEBI" id="CHEBI:29991"/>
        <dbReference type="ChEBI" id="CHEBI:37565"/>
        <dbReference type="ChEBI" id="CHEBI:43474"/>
        <dbReference type="ChEBI" id="CHEBI:57567"/>
        <dbReference type="ChEBI" id="CHEBI:58053"/>
        <dbReference type="ChEBI" id="CHEBI:58189"/>
        <dbReference type="EC" id="6.3.4.4"/>
    </reaction>
</comment>
<comment type="cofactor">
    <cofactor evidence="2">
        <name>Mg(2+)</name>
        <dbReference type="ChEBI" id="CHEBI:18420"/>
    </cofactor>
    <text evidence="2">Binds 1 Mg(2+) ion per subunit.</text>
</comment>
<comment type="pathway">
    <text evidence="2">Purine metabolism; AMP biosynthesis via de novo pathway; AMP from IMP: step 1/2.</text>
</comment>
<comment type="subunit">
    <text evidence="2">Homodimer.</text>
</comment>
<comment type="subcellular location">
    <subcellularLocation>
        <location evidence="2">Cytoplasm</location>
    </subcellularLocation>
</comment>
<comment type="similarity">
    <text evidence="2">Belongs to the adenylosuccinate synthetase family.</text>
</comment>
<sequence>MGKNVVVLGTQWGDEGKGKVVDLLTERAKYVVRYQGGHNAGHTLVINGEKTVLHLIPSGILRENVVSIIANGVVLAPDALLREMTELEARGVPVRERLLLSEACPLILPYHVALDNAREKARGAKAIGTTGRGIGPAYEDKVARRGLRVGDLFDKASFAVKLKEIMEYHNFQLVNYYHVDAVDYQSVLDEVMAVADLLTSMVVDVADLLNKAYRNGEYVMFEGAQGTLLDIDHGTYPYVTSSNTTAGGVATGSGIGPRCVDYVLGIVKAYSTRVGAGPFPTELFDSVGEFLCEKGNEFGATTGRRRRTGWLDAVAVRRAVELNSLSGFCLTKLDVLDGLDEVKICVGYRLPDGREVDVTPLAAEGWEGIEPIYEVLPGWKESTFGVKLRDGLPQAALNYIKRIEEVTGVPVDIISTGPDREETIVLRHPFDA</sequence>
<proteinExistence type="inferred from homology"/>
<evidence type="ECO:0000250" key="1"/>
<evidence type="ECO:0000255" key="2">
    <source>
        <dbReference type="HAMAP-Rule" id="MF_00011"/>
    </source>
</evidence>
<evidence type="ECO:0000305" key="3"/>
<organism>
    <name type="scientific">Edwardsiella ictaluri (strain 93-146)</name>
    <dbReference type="NCBI Taxonomy" id="634503"/>
    <lineage>
        <taxon>Bacteria</taxon>
        <taxon>Pseudomonadati</taxon>
        <taxon>Pseudomonadota</taxon>
        <taxon>Gammaproteobacteria</taxon>
        <taxon>Enterobacterales</taxon>
        <taxon>Hafniaceae</taxon>
        <taxon>Edwardsiella</taxon>
    </lineage>
</organism>
<dbReference type="EC" id="6.3.4.4" evidence="2"/>
<dbReference type="EMBL" id="AF026490">
    <property type="protein sequence ID" value="AAB86714.1"/>
    <property type="molecule type" value="Genomic_DNA"/>
</dbReference>
<dbReference type="EMBL" id="CP001600">
    <property type="protein sequence ID" value="ACR67653.1"/>
    <property type="molecule type" value="Genomic_DNA"/>
</dbReference>
<dbReference type="RefSeq" id="WP_015869857.1">
    <property type="nucleotide sequence ID" value="NZ_CP169062.1"/>
</dbReference>
<dbReference type="SMR" id="O31047"/>
<dbReference type="STRING" id="67780.B6E78_12850"/>
<dbReference type="KEGG" id="eic:NT01EI_0415"/>
<dbReference type="PATRIC" id="fig|634503.3.peg.375"/>
<dbReference type="HOGENOM" id="CLU_029848_0_0_6"/>
<dbReference type="OrthoDB" id="9807553at2"/>
<dbReference type="UniPathway" id="UPA00075">
    <property type="reaction ID" value="UER00335"/>
</dbReference>
<dbReference type="Proteomes" id="UP000001485">
    <property type="component" value="Chromosome"/>
</dbReference>
<dbReference type="GO" id="GO:0005737">
    <property type="term" value="C:cytoplasm"/>
    <property type="evidence" value="ECO:0007669"/>
    <property type="project" value="UniProtKB-SubCell"/>
</dbReference>
<dbReference type="GO" id="GO:0004019">
    <property type="term" value="F:adenylosuccinate synthase activity"/>
    <property type="evidence" value="ECO:0007669"/>
    <property type="project" value="UniProtKB-UniRule"/>
</dbReference>
<dbReference type="GO" id="GO:0005525">
    <property type="term" value="F:GTP binding"/>
    <property type="evidence" value="ECO:0007669"/>
    <property type="project" value="UniProtKB-UniRule"/>
</dbReference>
<dbReference type="GO" id="GO:0000287">
    <property type="term" value="F:magnesium ion binding"/>
    <property type="evidence" value="ECO:0007669"/>
    <property type="project" value="UniProtKB-UniRule"/>
</dbReference>
<dbReference type="GO" id="GO:0044208">
    <property type="term" value="P:'de novo' AMP biosynthetic process"/>
    <property type="evidence" value="ECO:0007669"/>
    <property type="project" value="UniProtKB-UniRule"/>
</dbReference>
<dbReference type="GO" id="GO:0046040">
    <property type="term" value="P:IMP metabolic process"/>
    <property type="evidence" value="ECO:0007669"/>
    <property type="project" value="TreeGrafter"/>
</dbReference>
<dbReference type="CDD" id="cd03108">
    <property type="entry name" value="AdSS"/>
    <property type="match status" value="1"/>
</dbReference>
<dbReference type="FunFam" id="1.10.300.10:FF:000001">
    <property type="entry name" value="Adenylosuccinate synthetase"/>
    <property type="match status" value="1"/>
</dbReference>
<dbReference type="FunFam" id="3.90.170.10:FF:000001">
    <property type="entry name" value="Adenylosuccinate synthetase"/>
    <property type="match status" value="1"/>
</dbReference>
<dbReference type="Gene3D" id="3.40.440.10">
    <property type="entry name" value="Adenylosuccinate Synthetase, subunit A, domain 1"/>
    <property type="match status" value="1"/>
</dbReference>
<dbReference type="Gene3D" id="1.10.300.10">
    <property type="entry name" value="Adenylosuccinate Synthetase, subunit A, domain 2"/>
    <property type="match status" value="1"/>
</dbReference>
<dbReference type="Gene3D" id="3.90.170.10">
    <property type="entry name" value="Adenylosuccinate Synthetase, subunit A, domain 3"/>
    <property type="match status" value="1"/>
</dbReference>
<dbReference type="HAMAP" id="MF_00011">
    <property type="entry name" value="Adenylosucc_synth"/>
    <property type="match status" value="1"/>
</dbReference>
<dbReference type="InterPro" id="IPR018220">
    <property type="entry name" value="Adenylosuccin_syn_GTP-bd"/>
</dbReference>
<dbReference type="InterPro" id="IPR033128">
    <property type="entry name" value="Adenylosuccin_syn_Lys_AS"/>
</dbReference>
<dbReference type="InterPro" id="IPR042109">
    <property type="entry name" value="Adenylosuccinate_synth_dom1"/>
</dbReference>
<dbReference type="InterPro" id="IPR042110">
    <property type="entry name" value="Adenylosuccinate_synth_dom2"/>
</dbReference>
<dbReference type="InterPro" id="IPR042111">
    <property type="entry name" value="Adenylosuccinate_synth_dom3"/>
</dbReference>
<dbReference type="InterPro" id="IPR001114">
    <property type="entry name" value="Adenylosuccinate_synthetase"/>
</dbReference>
<dbReference type="InterPro" id="IPR027417">
    <property type="entry name" value="P-loop_NTPase"/>
</dbReference>
<dbReference type="NCBIfam" id="NF002223">
    <property type="entry name" value="PRK01117.1"/>
    <property type="match status" value="1"/>
</dbReference>
<dbReference type="NCBIfam" id="TIGR00184">
    <property type="entry name" value="purA"/>
    <property type="match status" value="1"/>
</dbReference>
<dbReference type="PANTHER" id="PTHR11846">
    <property type="entry name" value="ADENYLOSUCCINATE SYNTHETASE"/>
    <property type="match status" value="1"/>
</dbReference>
<dbReference type="PANTHER" id="PTHR11846:SF0">
    <property type="entry name" value="ADENYLOSUCCINATE SYNTHETASE"/>
    <property type="match status" value="1"/>
</dbReference>
<dbReference type="Pfam" id="PF00709">
    <property type="entry name" value="Adenylsucc_synt"/>
    <property type="match status" value="1"/>
</dbReference>
<dbReference type="SMART" id="SM00788">
    <property type="entry name" value="Adenylsucc_synt"/>
    <property type="match status" value="1"/>
</dbReference>
<dbReference type="SUPFAM" id="SSF52540">
    <property type="entry name" value="P-loop containing nucleoside triphosphate hydrolases"/>
    <property type="match status" value="1"/>
</dbReference>
<dbReference type="PROSITE" id="PS01266">
    <property type="entry name" value="ADENYLOSUCCIN_SYN_1"/>
    <property type="match status" value="1"/>
</dbReference>
<dbReference type="PROSITE" id="PS00513">
    <property type="entry name" value="ADENYLOSUCCIN_SYN_2"/>
    <property type="match status" value="1"/>
</dbReference>
<feature type="initiator methionine" description="Removed" evidence="1">
    <location>
        <position position="1"/>
    </location>
</feature>
<feature type="chain" id="PRO_0000095177" description="Adenylosuccinate synthetase">
    <location>
        <begin position="2"/>
        <end position="432"/>
    </location>
</feature>
<feature type="active site" description="Proton acceptor" evidence="2">
    <location>
        <position position="14"/>
    </location>
</feature>
<feature type="active site" description="Proton donor" evidence="2">
    <location>
        <position position="42"/>
    </location>
</feature>
<feature type="binding site" evidence="2">
    <location>
        <begin position="13"/>
        <end position="19"/>
    </location>
    <ligand>
        <name>GTP</name>
        <dbReference type="ChEBI" id="CHEBI:37565"/>
    </ligand>
</feature>
<feature type="binding site" description="in other chain" evidence="2">
    <location>
        <begin position="14"/>
        <end position="17"/>
    </location>
    <ligand>
        <name>IMP</name>
        <dbReference type="ChEBI" id="CHEBI:58053"/>
        <note>ligand shared between dimeric partners</note>
    </ligand>
</feature>
<feature type="binding site" evidence="2">
    <location>
        <position position="14"/>
    </location>
    <ligand>
        <name>Mg(2+)</name>
        <dbReference type="ChEBI" id="CHEBI:18420"/>
    </ligand>
</feature>
<feature type="binding site" description="in other chain" evidence="2">
    <location>
        <begin position="39"/>
        <end position="42"/>
    </location>
    <ligand>
        <name>IMP</name>
        <dbReference type="ChEBI" id="CHEBI:58053"/>
        <note>ligand shared between dimeric partners</note>
    </ligand>
</feature>
<feature type="binding site" evidence="2">
    <location>
        <begin position="41"/>
        <end position="43"/>
    </location>
    <ligand>
        <name>GTP</name>
        <dbReference type="ChEBI" id="CHEBI:37565"/>
    </ligand>
</feature>
<feature type="binding site" evidence="2">
    <location>
        <position position="41"/>
    </location>
    <ligand>
        <name>Mg(2+)</name>
        <dbReference type="ChEBI" id="CHEBI:18420"/>
    </ligand>
</feature>
<feature type="binding site" description="in other chain" evidence="2">
    <location>
        <position position="130"/>
    </location>
    <ligand>
        <name>IMP</name>
        <dbReference type="ChEBI" id="CHEBI:58053"/>
        <note>ligand shared between dimeric partners</note>
    </ligand>
</feature>
<feature type="binding site" evidence="2">
    <location>
        <position position="144"/>
    </location>
    <ligand>
        <name>IMP</name>
        <dbReference type="ChEBI" id="CHEBI:58053"/>
        <note>ligand shared between dimeric partners</note>
    </ligand>
</feature>
<feature type="binding site" description="in other chain" evidence="2">
    <location>
        <position position="225"/>
    </location>
    <ligand>
        <name>IMP</name>
        <dbReference type="ChEBI" id="CHEBI:58053"/>
        <note>ligand shared between dimeric partners</note>
    </ligand>
</feature>
<feature type="binding site" description="in other chain" evidence="2">
    <location>
        <position position="240"/>
    </location>
    <ligand>
        <name>IMP</name>
        <dbReference type="ChEBI" id="CHEBI:58053"/>
        <note>ligand shared between dimeric partners</note>
    </ligand>
</feature>
<feature type="binding site" evidence="2">
    <location>
        <begin position="300"/>
        <end position="306"/>
    </location>
    <ligand>
        <name>substrate</name>
    </ligand>
</feature>
<feature type="binding site" description="in other chain" evidence="2">
    <location>
        <position position="304"/>
    </location>
    <ligand>
        <name>IMP</name>
        <dbReference type="ChEBI" id="CHEBI:58053"/>
        <note>ligand shared between dimeric partners</note>
    </ligand>
</feature>
<feature type="binding site" evidence="2">
    <location>
        <position position="306"/>
    </location>
    <ligand>
        <name>GTP</name>
        <dbReference type="ChEBI" id="CHEBI:37565"/>
    </ligand>
</feature>
<feature type="binding site" evidence="2">
    <location>
        <begin position="332"/>
        <end position="334"/>
    </location>
    <ligand>
        <name>GTP</name>
        <dbReference type="ChEBI" id="CHEBI:37565"/>
    </ligand>
</feature>
<feature type="binding site" evidence="2">
    <location>
        <begin position="415"/>
        <end position="417"/>
    </location>
    <ligand>
        <name>GTP</name>
        <dbReference type="ChEBI" id="CHEBI:37565"/>
    </ligand>
</feature>
<feature type="sequence conflict" description="In Ref. 1; AAB86714." evidence="3" ref="1">
    <original>C</original>
    <variation>R</variation>
    <location>
        <position position="259"/>
    </location>
</feature>
<accession>O31047</accession>
<accession>C5BF67</accession>
<keyword id="KW-0963">Cytoplasm</keyword>
<keyword id="KW-0342">GTP-binding</keyword>
<keyword id="KW-0436">Ligase</keyword>
<keyword id="KW-0460">Magnesium</keyword>
<keyword id="KW-0479">Metal-binding</keyword>
<keyword id="KW-0547">Nucleotide-binding</keyword>
<keyword id="KW-0658">Purine biosynthesis</keyword>
<gene>
    <name evidence="2" type="primary">purA</name>
    <name type="ordered locus">NT01EI_0415</name>
</gene>
<name>PURA_EDWI9</name>
<reference key="1">
    <citation type="journal article" date="1997" name="Infect. Immun.">
        <title>Attenuation, persistence, and vaccine potential of an Edwardsiella ictaluri purA mutant.</title>
        <authorList>
            <person name="Lawrence M.L."/>
            <person name="Cooper R.K."/>
            <person name="Thune R.L."/>
        </authorList>
    </citation>
    <scope>NUCLEOTIDE SEQUENCE [GENOMIC DNA]</scope>
</reference>
<reference key="2">
    <citation type="submission" date="2009-03" db="EMBL/GenBank/DDBJ databases">
        <title>Complete genome sequence of Edwardsiella ictaluri 93-146.</title>
        <authorList>
            <person name="Williams M.L."/>
            <person name="Gillaspy A.F."/>
            <person name="Dyer D.W."/>
            <person name="Thune R.L."/>
            <person name="Waldbieser G.C."/>
            <person name="Schuster S.C."/>
            <person name="Gipson J."/>
            <person name="Zaitshik J."/>
            <person name="Landry C."/>
            <person name="Lawrence M.L."/>
        </authorList>
    </citation>
    <scope>NUCLEOTIDE SEQUENCE [LARGE SCALE GENOMIC DNA]</scope>
    <source>
        <strain>93-146</strain>
    </source>
</reference>